<keyword id="KW-0143">Chaperone</keyword>
<keyword id="KW-0963">Cytoplasm</keyword>
<keyword id="KW-0653">Protein transport</keyword>
<keyword id="KW-1185">Reference proteome</keyword>
<keyword id="KW-0811">Translocation</keyword>
<keyword id="KW-0813">Transport</keyword>
<feature type="chain" id="PRO_1000195338" description="Protein-export protein SecB">
    <location>
        <begin position="1"/>
        <end position="168"/>
    </location>
</feature>
<feature type="region of interest" description="Disordered" evidence="2">
    <location>
        <begin position="1"/>
        <end position="20"/>
    </location>
</feature>
<name>SECB_RHOCS</name>
<gene>
    <name evidence="1" type="primary">secB</name>
    <name type="ordered locus">RC1_2589</name>
</gene>
<dbReference type="EMBL" id="CP000613">
    <property type="protein sequence ID" value="ACI99969.1"/>
    <property type="molecule type" value="Genomic_DNA"/>
</dbReference>
<dbReference type="RefSeq" id="WP_012567751.1">
    <property type="nucleotide sequence ID" value="NC_011420.2"/>
</dbReference>
<dbReference type="SMR" id="B6IU92"/>
<dbReference type="STRING" id="414684.RC1_2589"/>
<dbReference type="KEGG" id="rce:RC1_2589"/>
<dbReference type="eggNOG" id="COG1952">
    <property type="taxonomic scope" value="Bacteria"/>
</dbReference>
<dbReference type="HOGENOM" id="CLU_111574_0_0_5"/>
<dbReference type="OrthoDB" id="9795145at2"/>
<dbReference type="Proteomes" id="UP000001591">
    <property type="component" value="Chromosome"/>
</dbReference>
<dbReference type="GO" id="GO:0005737">
    <property type="term" value="C:cytoplasm"/>
    <property type="evidence" value="ECO:0007669"/>
    <property type="project" value="UniProtKB-SubCell"/>
</dbReference>
<dbReference type="GO" id="GO:0051082">
    <property type="term" value="F:unfolded protein binding"/>
    <property type="evidence" value="ECO:0007669"/>
    <property type="project" value="InterPro"/>
</dbReference>
<dbReference type="GO" id="GO:0006457">
    <property type="term" value="P:protein folding"/>
    <property type="evidence" value="ECO:0007669"/>
    <property type="project" value="UniProtKB-UniRule"/>
</dbReference>
<dbReference type="GO" id="GO:0051262">
    <property type="term" value="P:protein tetramerization"/>
    <property type="evidence" value="ECO:0007669"/>
    <property type="project" value="InterPro"/>
</dbReference>
<dbReference type="GO" id="GO:0015031">
    <property type="term" value="P:protein transport"/>
    <property type="evidence" value="ECO:0007669"/>
    <property type="project" value="UniProtKB-UniRule"/>
</dbReference>
<dbReference type="Gene3D" id="3.10.420.10">
    <property type="entry name" value="SecB-like"/>
    <property type="match status" value="1"/>
</dbReference>
<dbReference type="HAMAP" id="MF_00821">
    <property type="entry name" value="SecB"/>
    <property type="match status" value="1"/>
</dbReference>
<dbReference type="InterPro" id="IPR003708">
    <property type="entry name" value="SecB"/>
</dbReference>
<dbReference type="InterPro" id="IPR035958">
    <property type="entry name" value="SecB-like_sf"/>
</dbReference>
<dbReference type="NCBIfam" id="NF004392">
    <property type="entry name" value="PRK05751.1-3"/>
    <property type="match status" value="1"/>
</dbReference>
<dbReference type="NCBIfam" id="TIGR00809">
    <property type="entry name" value="secB"/>
    <property type="match status" value="1"/>
</dbReference>
<dbReference type="PANTHER" id="PTHR36918">
    <property type="match status" value="1"/>
</dbReference>
<dbReference type="PANTHER" id="PTHR36918:SF1">
    <property type="entry name" value="PROTEIN-EXPORT PROTEIN SECB"/>
    <property type="match status" value="1"/>
</dbReference>
<dbReference type="Pfam" id="PF02556">
    <property type="entry name" value="SecB"/>
    <property type="match status" value="1"/>
</dbReference>
<dbReference type="PRINTS" id="PR01594">
    <property type="entry name" value="SECBCHAPRONE"/>
</dbReference>
<dbReference type="SUPFAM" id="SSF54611">
    <property type="entry name" value="SecB-like"/>
    <property type="match status" value="1"/>
</dbReference>
<sequence length="168" mass="18429">MTDETAANGENEAGRQSQSSSLPLVVNAQYVKDFSFENPNAPQSLMADQGQPKIDLQVDVQARGLNDTVSEVVLSMRAEATRNDRTAFIVELSYAGIFTLPAQIQPEQARAILLIEAPRLLFPFARQIVAEATQNGGYPPLMLQPLDFVDLYRRQVLNRGSNGEVGHA</sequence>
<comment type="function">
    <text evidence="1">One of the proteins required for the normal export of preproteins out of the cell cytoplasm. It is a molecular chaperone that binds to a subset of precursor proteins, maintaining them in a translocation-competent state. It also specifically binds to its receptor SecA.</text>
</comment>
<comment type="subunit">
    <text evidence="1">Homotetramer, a dimer of dimers. One homotetramer interacts with 1 SecA dimer.</text>
</comment>
<comment type="subcellular location">
    <subcellularLocation>
        <location evidence="1">Cytoplasm</location>
    </subcellularLocation>
</comment>
<comment type="similarity">
    <text evidence="1">Belongs to the SecB family.</text>
</comment>
<evidence type="ECO:0000255" key="1">
    <source>
        <dbReference type="HAMAP-Rule" id="MF_00821"/>
    </source>
</evidence>
<evidence type="ECO:0000256" key="2">
    <source>
        <dbReference type="SAM" id="MobiDB-lite"/>
    </source>
</evidence>
<organism>
    <name type="scientific">Rhodospirillum centenum (strain ATCC 51521 / SW)</name>
    <dbReference type="NCBI Taxonomy" id="414684"/>
    <lineage>
        <taxon>Bacteria</taxon>
        <taxon>Pseudomonadati</taxon>
        <taxon>Pseudomonadota</taxon>
        <taxon>Alphaproteobacteria</taxon>
        <taxon>Rhodospirillales</taxon>
        <taxon>Rhodospirillaceae</taxon>
        <taxon>Rhodospirillum</taxon>
    </lineage>
</organism>
<protein>
    <recommendedName>
        <fullName evidence="1">Protein-export protein SecB</fullName>
    </recommendedName>
</protein>
<proteinExistence type="inferred from homology"/>
<reference key="1">
    <citation type="submission" date="2007-03" db="EMBL/GenBank/DDBJ databases">
        <title>Genome sequence of Rhodospirillum centenum.</title>
        <authorList>
            <person name="Touchman J.W."/>
            <person name="Bauer C."/>
            <person name="Blankenship R.E."/>
        </authorList>
    </citation>
    <scope>NUCLEOTIDE SEQUENCE [LARGE SCALE GENOMIC DNA]</scope>
    <source>
        <strain>ATCC 51521 / SW</strain>
    </source>
</reference>
<accession>B6IU92</accession>